<keyword id="KW-0014">AIDS</keyword>
<keyword id="KW-0053">Apoptosis</keyword>
<keyword id="KW-1165">Clathrin-mediated endocytosis of virus by host</keyword>
<keyword id="KW-0165">Cleavage on pair of basic residues</keyword>
<keyword id="KW-0175">Coiled coil</keyword>
<keyword id="KW-1015">Disulfide bond</keyword>
<keyword id="KW-1170">Fusion of virus membrane with host endosomal membrane</keyword>
<keyword id="KW-1168">Fusion of virus membrane with host membrane</keyword>
<keyword id="KW-0325">Glycoprotein</keyword>
<keyword id="KW-1032">Host cell membrane</keyword>
<keyword id="KW-1039">Host endosome</keyword>
<keyword id="KW-1043">Host membrane</keyword>
<keyword id="KW-0945">Host-virus interaction</keyword>
<keyword id="KW-0449">Lipoprotein</keyword>
<keyword id="KW-0472">Membrane</keyword>
<keyword id="KW-0564">Palmitate</keyword>
<keyword id="KW-0732">Signal</keyword>
<keyword id="KW-0812">Transmembrane</keyword>
<keyword id="KW-1133">Transmembrane helix</keyword>
<keyword id="KW-1161">Viral attachment to host cell</keyword>
<keyword id="KW-0261">Viral envelope protein</keyword>
<keyword id="KW-0899">Viral immunoevasion</keyword>
<keyword id="KW-1162">Viral penetration into host cytoplasm</keyword>
<keyword id="KW-0946">Virion</keyword>
<keyword id="KW-1164">Virus endocytosis by host</keyword>
<keyword id="KW-1160">Virus entry into host cell</keyword>
<organismHost>
    <name type="scientific">Homo sapiens</name>
    <name type="common">Human</name>
    <dbReference type="NCBI Taxonomy" id="9606"/>
</organismHost>
<dbReference type="EMBL" id="M26727">
    <property type="protein sequence ID" value="AAA83397.1"/>
    <property type="molecule type" value="Genomic_RNA"/>
</dbReference>
<dbReference type="SMR" id="P20888"/>
<dbReference type="GlyCosmos" id="P20888">
    <property type="glycosylation" value="26 sites, No reported glycans"/>
</dbReference>
<dbReference type="Reactome" id="R-HSA-5621480">
    <property type="pathway name" value="Dectin-2 family"/>
</dbReference>
<dbReference type="Proteomes" id="UP000121275">
    <property type="component" value="Genome"/>
</dbReference>
<dbReference type="GO" id="GO:0044175">
    <property type="term" value="C:host cell endosome membrane"/>
    <property type="evidence" value="ECO:0007669"/>
    <property type="project" value="UniProtKB-SubCell"/>
</dbReference>
<dbReference type="GO" id="GO:0020002">
    <property type="term" value="C:host cell plasma membrane"/>
    <property type="evidence" value="ECO:0007669"/>
    <property type="project" value="UniProtKB-SubCell"/>
</dbReference>
<dbReference type="GO" id="GO:0016020">
    <property type="term" value="C:membrane"/>
    <property type="evidence" value="ECO:0007669"/>
    <property type="project" value="UniProtKB-UniRule"/>
</dbReference>
<dbReference type="GO" id="GO:0019031">
    <property type="term" value="C:viral envelope"/>
    <property type="evidence" value="ECO:0007669"/>
    <property type="project" value="UniProtKB-KW"/>
</dbReference>
<dbReference type="GO" id="GO:0055036">
    <property type="term" value="C:virion membrane"/>
    <property type="evidence" value="ECO:0007669"/>
    <property type="project" value="UniProtKB-SubCell"/>
</dbReference>
<dbReference type="GO" id="GO:0005198">
    <property type="term" value="F:structural molecule activity"/>
    <property type="evidence" value="ECO:0007669"/>
    <property type="project" value="UniProtKB-UniRule"/>
</dbReference>
<dbReference type="GO" id="GO:0075512">
    <property type="term" value="P:clathrin-dependent endocytosis of virus by host cell"/>
    <property type="evidence" value="ECO:0007669"/>
    <property type="project" value="UniProtKB-UniRule"/>
</dbReference>
<dbReference type="GO" id="GO:0039654">
    <property type="term" value="P:fusion of virus membrane with host endosome membrane"/>
    <property type="evidence" value="ECO:0007669"/>
    <property type="project" value="UniProtKB-UniRule"/>
</dbReference>
<dbReference type="GO" id="GO:0019064">
    <property type="term" value="P:fusion of virus membrane with host plasma membrane"/>
    <property type="evidence" value="ECO:0007669"/>
    <property type="project" value="UniProtKB-UniRule"/>
</dbReference>
<dbReference type="GO" id="GO:1903908">
    <property type="term" value="P:positive regulation of plasma membrane raft polarization"/>
    <property type="evidence" value="ECO:0007669"/>
    <property type="project" value="UniProtKB-UniRule"/>
</dbReference>
<dbReference type="GO" id="GO:1903911">
    <property type="term" value="P:positive regulation of receptor clustering"/>
    <property type="evidence" value="ECO:0007669"/>
    <property type="project" value="UniProtKB-UniRule"/>
</dbReference>
<dbReference type="GO" id="GO:0019082">
    <property type="term" value="P:viral protein processing"/>
    <property type="evidence" value="ECO:0007669"/>
    <property type="project" value="UniProtKB-UniRule"/>
</dbReference>
<dbReference type="GO" id="GO:0019062">
    <property type="term" value="P:virion attachment to host cell"/>
    <property type="evidence" value="ECO:0007669"/>
    <property type="project" value="UniProtKB-UniRule"/>
</dbReference>
<dbReference type="CDD" id="cd09909">
    <property type="entry name" value="HIV-1-like_HR1-HR2"/>
    <property type="match status" value="1"/>
</dbReference>
<dbReference type="FunFam" id="1.10.287.210:FF:000001">
    <property type="entry name" value="Envelope glycoprotein gp160"/>
    <property type="match status" value="1"/>
</dbReference>
<dbReference type="FunFam" id="2.170.40.20:FF:000002">
    <property type="entry name" value="Envelope glycoprotein gp160"/>
    <property type="match status" value="1"/>
</dbReference>
<dbReference type="FunFam" id="2.170.40.20:FF:000003">
    <property type="entry name" value="Envelope glycoprotein gp160"/>
    <property type="match status" value="1"/>
</dbReference>
<dbReference type="Gene3D" id="1.10.287.210">
    <property type="match status" value="1"/>
</dbReference>
<dbReference type="Gene3D" id="2.170.40.20">
    <property type="entry name" value="Human immunodeficiency virus 1, Gp160, envelope glycoprotein"/>
    <property type="match status" value="2"/>
</dbReference>
<dbReference type="Gene3D" id="1.20.5.490">
    <property type="entry name" value="Single helix bin"/>
    <property type="match status" value="1"/>
</dbReference>
<dbReference type="HAMAP" id="MF_04083">
    <property type="entry name" value="HIV_ENV"/>
    <property type="match status" value="1"/>
</dbReference>
<dbReference type="InterPro" id="IPR036377">
    <property type="entry name" value="Gp120_core_sf"/>
</dbReference>
<dbReference type="InterPro" id="IPR037527">
    <property type="entry name" value="Gp160"/>
</dbReference>
<dbReference type="InterPro" id="IPR000328">
    <property type="entry name" value="GP41-like"/>
</dbReference>
<dbReference type="InterPro" id="IPR000777">
    <property type="entry name" value="HIV1_Gp120"/>
</dbReference>
<dbReference type="Pfam" id="PF00516">
    <property type="entry name" value="GP120"/>
    <property type="match status" value="1"/>
</dbReference>
<dbReference type="Pfam" id="PF00517">
    <property type="entry name" value="GP41"/>
    <property type="match status" value="1"/>
</dbReference>
<dbReference type="SUPFAM" id="SSF56502">
    <property type="entry name" value="gp120 core"/>
    <property type="match status" value="2"/>
</dbReference>
<dbReference type="SUPFAM" id="SSF58069">
    <property type="entry name" value="Virus ectodomain"/>
    <property type="match status" value="1"/>
</dbReference>
<comment type="function">
    <molecule>Envelope glycoprotein gp160</molecule>
    <text evidence="1">Oligomerizes in the host endoplasmic reticulum into predominantly trimers. In a second time, gp160 transits in the host Golgi, where glycosylation is completed. The precursor is then proteolytically cleaved in the trans-Golgi and thereby activated by cellular furin or furin-like proteases to produce gp120 and gp41.</text>
</comment>
<comment type="function">
    <molecule>Surface protein gp120</molecule>
    <text evidence="1">Attaches the virus to the host lymphoid cell by binding to the primary receptor CD4. This interaction induces a structural rearrangement creating a high affinity binding site for a chemokine coreceptor like CXCR4 and/or CCR5. Acts as a ligand for CD209/DC-SIGN and CLEC4M/DC-SIGNR, which are respectively found on dendritic cells (DCs), and on endothelial cells of liver sinusoids and lymph node sinuses. These interactions allow capture of viral particles at mucosal surfaces by these cells and subsequent transmission to permissive cells. HIV subverts the migration properties of dendritic cells to gain access to CD4+ T-cells in lymph nodes. Virus transmission to permissive T-cells occurs either in trans (without DCs infection, through viral capture and transmission), or in cis (following DCs productive infection, through the usual CD4-gp120 interaction), thereby inducing a robust infection. In trans infection, bound virions remain infectious over days and it is proposed that they are not degraded, but protected in non-lysosomal acidic organelles within the DCs close to the cell membrane thus contributing to the viral infectious potential during DCs' migration from the periphery to the lymphoid tissues. On arrival at lymphoid tissues, intact virions recycle back to DCs' cell surface allowing virus transmission to CD4+ T-cells.</text>
</comment>
<comment type="function">
    <molecule>Transmembrane protein gp41</molecule>
    <text evidence="1">Acts as a class I viral fusion protein. Under the current model, the protein has at least 3 conformational states: pre-fusion native state, pre-hairpin intermediate state, and post-fusion hairpin state. During fusion of viral and target intracellular membranes, the coiled coil regions (heptad repeats) assume a trimer-of-hairpins structure, positioning the fusion peptide in close proximity to the C-terminal region of the ectodomain. The formation of this structure appears to drive apposition and subsequent fusion of viral and target cell membranes. Complete fusion occurs in host cell endosomes and is dynamin-dependent, however some lipid transfer might occur at the plasma membrane. The virus undergoes clathrin-dependent internalization long before endosomal fusion, thus minimizing the surface exposure of conserved viral epitopes during fusion and reducing the efficacy of inhibitors targeting these epitopes. Membranes fusion leads to delivery of the nucleocapsid into the cytoplasm.</text>
</comment>
<comment type="subunit">
    <molecule>Surface protein gp120</molecule>
    <text evidence="1">The mature envelope protein (Env) consists of a homotrimer of non-covalently associated gp120-gp41 heterodimers. The resulting complex protrudes from the virus surface as a spike. There seems to be as few as 10 spikes on the average virion. Interacts with host CD4, CCR5 and CXCR4. Gp120 also interacts with the C-type lectins CD209/DC-SIGN and CLEC4M/DC-SIGNR (collectively referred to as DC-SIGN(R)). Gp120 and gp41 interact with GalCer. Gp120 interacts with host ITGA4/ITGB7 complex; on CD4+ T-cells, this interaction results in rapid activation of integrin ITGAL/LFA-1, which facilitates efficient cell-to-cell spreading of HIV-1. Gp120 interacts with cell-associated heparan sulfate; this interaction increases virus infectivity on permissive cells and may be involved in infection of CD4- cells.</text>
</comment>
<comment type="subunit">
    <molecule>Transmembrane protein gp41</molecule>
    <text evidence="1">The mature envelope protein (Env) consists of a homotrimer of non-covalently associated gp120-gp41 heterodimers. The resulting complex protrudes from the virus surface as a spike. There seems to be as few as 10 spikes on the average virion.</text>
</comment>
<comment type="subcellular location">
    <molecule>Surface protein gp120</molecule>
    <subcellularLocation>
        <location evidence="1">Virion membrane</location>
        <topology evidence="1">Peripheral membrane protein</topology>
    </subcellularLocation>
    <subcellularLocation>
        <location evidence="1">Host cell membrane</location>
        <topology evidence="1">Peripheral membrane protein</topology>
    </subcellularLocation>
    <subcellularLocation>
        <location evidence="1">Host endosome membrane</location>
        <topology evidence="1">Single-pass type I membrane protein</topology>
    </subcellularLocation>
    <text evidence="1">The surface protein is not anchored to the viral envelope, but associates with the extravirion surface through its binding to TM. It is probably concentrated at the site of budding and incorporated into the virions possibly by contacts between the cytoplasmic tail of Env and the N-terminus of Gag.</text>
</comment>
<comment type="subcellular location">
    <molecule>Transmembrane protein gp41</molecule>
    <subcellularLocation>
        <location evidence="1">Virion membrane</location>
        <topology evidence="1">Single-pass type I membrane protein</topology>
    </subcellularLocation>
    <subcellularLocation>
        <location evidence="1">Host cell membrane</location>
        <topology evidence="1">Single-pass type I membrane protein</topology>
    </subcellularLocation>
    <subcellularLocation>
        <location evidence="1">Host endosome membrane</location>
        <topology evidence="1">Single-pass type I membrane protein</topology>
    </subcellularLocation>
    <text evidence="1">It is probably concentrated at the site of budding and incorporated into the virions possibly by contacts between the cytoplasmic tail of Env and the N-terminus of Gag.</text>
</comment>
<comment type="domain">
    <text evidence="1">Some of the most genetically diverse regions of the viral genome are present in Env. They are called variable regions 1 through 5 (V1 through V5). Coreceptor usage of gp120 is determined mainly by the primary structure of the third variable region (V3) in the outer domain of gp120. The sequence of V3 determines which coreceptor, CCR5 and/or CXCR4 (corresponding to R5/macrophage, X4/T cell and R5X4/T cell and macrophage tropism), is used to trigger the fusion potential of the Env complex, and hence which cells the virus can infect. Binding to CCR5 involves a region adjacent in addition to V3.</text>
</comment>
<comment type="domain">
    <text evidence="1">The membrane proximal external region (MPER) present in gp41 is a tryptophan-rich region recognized by the antibodies 2F5, Z13, and 4E10. MPER seems to play a role in fusion.</text>
</comment>
<comment type="domain">
    <text evidence="1">The 17 amino acids long immunosuppressive region is present in many retroviral envelope proteins. Synthetic peptides derived from this relatively conserved sequence inhibit immune function in vitro and in vivo.</text>
</comment>
<comment type="domain">
    <text evidence="1">The YXXL motif is involved in determining the exact site of viral release at the surface of infected mononuclear cells and promotes endocytosis. YXXL and di-leucine endocytosis motifs interact directly or indirectly with the clathrin adapter complexes, opperate independently, and their activities are not additive.</text>
</comment>
<comment type="domain">
    <text evidence="1">The CD4-binding region is targeted by the antibody b12.</text>
</comment>
<comment type="PTM">
    <text evidence="1">Highly glycosylated by host. The high number of glycan on the protein is reffered to as 'glycan shield' because it contributes to hide protein sequence from adaptive immune system.</text>
</comment>
<comment type="PTM">
    <text evidence="1">Palmitoylation of the transmembrane protein and of Env polyprotein (prior to its proteolytic cleavage) is essential for their association with host cell membrane lipid rafts. Palmitoylation is therefore required for envelope trafficking to classical lipid rafts, but not for viral replication.</text>
</comment>
<comment type="PTM">
    <text evidence="1">Specific enzymatic cleavages in vivo yield mature proteins. Envelope glycoproteins are synthesized as an inactive precursor that is heavily N-glycosylated and processed likely by host cell furin in the Golgi to yield the mature SU and TM proteins. The cleavage site between SU and TM requires the minimal sequence [KR]-X-[KR]-R. About 2 of the 9 disulfide bonds of gp41 are reduced by P4HB/PDI, following binding to CD4 receptor.</text>
</comment>
<comment type="miscellaneous">
    <text evidence="1">Inhibitors targeting HIV-1 viral envelope proteins are used as antiretroviral drugs. Attachment of virions to the cell surface via non-specific interactions and CD4 binding can be blocked by inhibitors that include cyanovirin-N, cyclotriazadisulfonamide analogs, PRO 2000, TNX 355 and PRO 542. In addition, BMS 806 can block CD4-induced conformational changes. Env interactions with the coreceptor molecules can be targeted by CCR5 antagonists including SCH-D, maraviroc (UK 427857) and aplaviroc (GW 873140), and the CXCR4 antagonist AMD 070. Fusion of viral and cellular membranes can be inhibited by peptides such as enfuvirtide and tifuvirtide (T 1249). Resistance to inhibitors associated with mutations in Env are observed. Most of the time, single mutations confer only a modest reduction in drug susceptibility. Combination of several mutations is usually required to develop a high-level drug resistance.</text>
</comment>
<comment type="miscellaneous">
    <text evidence="1">HIV-1 lineages are divided in three main groups, M (for Major), O (for Outlier), and N (for New, or Non-M, Non-O). The vast majority of strains found worldwide belong to the group M. Group O seems to be endemic to and largely confined to Cameroon and neighboring countries in West Central Africa, where these viruses represent a small minority of HIV-1 strains. The group N is represented by a limited number of isolates from Cameroonian persons. The group M is further subdivided in 9 clades or subtypes (A to D, F to H, J and K).</text>
</comment>
<comment type="similarity">
    <text evidence="1">Belongs to the HIV-1 env protein family.</text>
</comment>
<comment type="online information" name="hivdb">
    <link uri="https://hivdb.stanford.edu"/>
    <text>HIV drug resistance database</text>
</comment>
<comment type="online information" name="HIV drug resistance mutations">
    <link uri="https://www.iasusa.org/hiv-drug-resistance/hiv-drug-resistance-mutations/"/>
</comment>
<feature type="signal peptide" evidence="1">
    <location>
        <begin position="1"/>
        <end position="31"/>
    </location>
</feature>
<feature type="chain" id="PRO_0000239486" description="Envelope glycoprotein gp160" evidence="1">
    <location>
        <begin position="32"/>
        <end position="855"/>
    </location>
</feature>
<feature type="chain" id="PRO_0000038413" description="Surface protein gp120" evidence="1">
    <location>
        <begin position="32"/>
        <end position="509"/>
    </location>
</feature>
<feature type="chain" id="PRO_0000038414" description="Transmembrane protein gp41" evidence="1">
    <location>
        <begin position="510"/>
        <end position="855"/>
    </location>
</feature>
<feature type="topological domain" description="Extracellular" evidence="1">
    <location>
        <begin position="32"/>
        <end position="683"/>
    </location>
</feature>
<feature type="transmembrane region" description="Helical" evidence="1">
    <location>
        <begin position="684"/>
        <end position="704"/>
    </location>
</feature>
<feature type="topological domain" description="Cytoplasmic" evidence="1">
    <location>
        <begin position="705"/>
        <end position="855"/>
    </location>
</feature>
<feature type="region of interest" description="V1" evidence="1">
    <location>
        <begin position="130"/>
        <end position="161"/>
    </location>
</feature>
<feature type="region of interest" description="V2" evidence="1">
    <location>
        <begin position="162"/>
        <end position="201"/>
    </location>
</feature>
<feature type="region of interest" description="V3" evidence="1">
    <location>
        <begin position="301"/>
        <end position="334"/>
    </location>
</feature>
<feature type="region of interest" description="CD4-binding loop" evidence="1">
    <location>
        <begin position="367"/>
        <end position="377"/>
    </location>
</feature>
<feature type="region of interest" description="V4" evidence="1">
    <location>
        <begin position="388"/>
        <end position="415"/>
    </location>
</feature>
<feature type="region of interest" description="V5">
    <location>
        <begin position="458"/>
        <end position="469"/>
    </location>
</feature>
<feature type="region of interest" description="V5" evidence="1">
    <location>
        <begin position="460"/>
        <end position="469"/>
    </location>
</feature>
<feature type="region of interest" description="Fusion peptide" evidence="1">
    <location>
        <begin position="510"/>
        <end position="531"/>
    </location>
</feature>
<feature type="region of interest" description="Immunosuppression" evidence="1">
    <location>
        <begin position="573"/>
        <end position="591"/>
    </location>
</feature>
<feature type="region of interest" description="MPER; binding to GalCer" evidence="1">
    <location>
        <begin position="661"/>
        <end position="682"/>
    </location>
</feature>
<feature type="region of interest" description="Disordered" evidence="2">
    <location>
        <begin position="718"/>
        <end position="742"/>
    </location>
</feature>
<feature type="coiled-coil region" evidence="1">
    <location>
        <begin position="632"/>
        <end position="666"/>
    </location>
</feature>
<feature type="short sequence motif" description="YXXL motif; contains endocytosis signal" evidence="1">
    <location>
        <begin position="711"/>
        <end position="714"/>
    </location>
</feature>
<feature type="short sequence motif" description="Di-leucine internalization motif" evidence="1">
    <location>
        <begin position="854"/>
        <end position="855"/>
    </location>
</feature>
<feature type="site" description="Cleavage; by host furin" evidence="1">
    <location>
        <begin position="509"/>
        <end position="510"/>
    </location>
</feature>
<feature type="lipid moiety-binding region" description="S-palmitoyl cysteine; by host" evidence="1">
    <location>
        <position position="763"/>
    </location>
</feature>
<feature type="glycosylation site" description="N-linked (GlcNAc...) asparagine; by host" evidence="1">
    <location>
        <position position="87"/>
    </location>
</feature>
<feature type="glycosylation site" description="N-linked (GlcNAc...) asparagine; by host" evidence="1">
    <location>
        <position position="134"/>
    </location>
</feature>
<feature type="glycosylation site" description="N-linked (GlcNAc...) asparagine; by host" evidence="1">
    <location>
        <position position="142"/>
    </location>
</feature>
<feature type="glycosylation site" description="N-linked (GlcNAc...) asparagine; by host" evidence="1">
    <location>
        <position position="145"/>
    </location>
</feature>
<feature type="glycosylation site" description="N-linked (GlcNAc...) asparagine; by host" evidence="1">
    <location>
        <position position="161"/>
    </location>
</feature>
<feature type="glycosylation site" description="N-linked (GlcNAc...) asparagine; by host" evidence="1">
    <location>
        <position position="165"/>
    </location>
</feature>
<feature type="glycosylation site" description="N-linked (GlcNAc...) asparagine; by host" evidence="1">
    <location>
        <position position="192"/>
    </location>
</feature>
<feature type="glycosylation site" description="N-linked (GlcNAc...) asparagine; by host" evidence="1">
    <location>
        <position position="202"/>
    </location>
</feature>
<feature type="glycosylation site" description="N-linked (GlcNAc...) asparagine; by host" evidence="1">
    <location>
        <position position="239"/>
    </location>
</feature>
<feature type="glycosylation site" description="N-linked (GlcNAc...) asparagine; by host" evidence="1">
    <location>
        <position position="246"/>
    </location>
</feature>
<feature type="glycosylation site" description="N-linked (GlcNAc...) asparagine; by host" evidence="1">
    <location>
        <position position="267"/>
    </location>
</feature>
<feature type="glycosylation site" description="N-linked (GlcNAc...) asparagine; by host" evidence="1">
    <location>
        <position position="281"/>
    </location>
</feature>
<feature type="glycosylation site" description="N-linked (GlcNAc...) asparagine; by host" evidence="1">
    <location>
        <position position="294"/>
    </location>
</feature>
<feature type="glycosylation site" description="N-linked (GlcNAc...) asparagine; by host" evidence="1">
    <location>
        <position position="300"/>
    </location>
</feature>
<feature type="glycosylation site" description="N-linked (GlcNAc...) asparagine; by host" evidence="1">
    <location>
        <position position="306"/>
    </location>
</feature>
<feature type="glycosylation site" description="N-linked (GlcNAc...) asparagine; by host" evidence="1">
    <location>
        <position position="336"/>
    </location>
</feature>
<feature type="glycosylation site" description="N-linked (GlcNAc...) asparagine; by host" evidence="1">
    <location>
        <position position="359"/>
    </location>
</feature>
<feature type="glycosylation site" description="N-linked (GlcNAc...) asparagine; by host" evidence="1">
    <location>
        <position position="389"/>
    </location>
</feature>
<feature type="glycosylation site" description="N-linked (GlcNAc...) asparagine; by host" evidence="1">
    <location>
        <position position="395"/>
    </location>
</feature>
<feature type="glycosylation site" description="N-linked (GlcNAc...) asparagine; by host" evidence="1">
    <location>
        <position position="399"/>
    </location>
</feature>
<feature type="glycosylation site" description="N-linked (GlcNAc...) asparagine; by host" evidence="1">
    <location>
        <position position="405"/>
    </location>
</feature>
<feature type="glycosylation site" description="N-linked (GlcNAc...) asparagine; by host" evidence="1">
    <location>
        <position position="458"/>
    </location>
</feature>
<feature type="glycosylation site" description="N-linked (GlcNAc...) asparagine; by host" evidence="1">
    <location>
        <position position="610"/>
    </location>
</feature>
<feature type="glycosylation site" description="N-linked (GlcNAc...) asparagine; by host" evidence="1">
    <location>
        <position position="615"/>
    </location>
</feature>
<feature type="glycosylation site" description="N-linked (GlcNAc...) asparagine; by host" evidence="1">
    <location>
        <position position="624"/>
    </location>
</feature>
<feature type="glycosylation site" description="N-linked (GlcNAc...) asparagine; by host" evidence="1">
    <location>
        <position position="636"/>
    </location>
</feature>
<feature type="disulfide bond" evidence="1">
    <location>
        <begin position="53"/>
        <end position="73"/>
    </location>
</feature>
<feature type="disulfide bond" evidence="1">
    <location>
        <begin position="118"/>
        <end position="210"/>
    </location>
</feature>
<feature type="disulfide bond" evidence="1">
    <location>
        <begin position="125"/>
        <end position="201"/>
    </location>
</feature>
<feature type="disulfide bond" evidence="1">
    <location>
        <begin position="130"/>
        <end position="162"/>
    </location>
</feature>
<feature type="disulfide bond" evidence="1">
    <location>
        <begin position="223"/>
        <end position="252"/>
    </location>
</feature>
<feature type="disulfide bond" evidence="1">
    <location>
        <begin position="233"/>
        <end position="244"/>
    </location>
</feature>
<feature type="disulfide bond" evidence="1">
    <location>
        <begin position="301"/>
        <end position="335"/>
    </location>
</feature>
<feature type="disulfide bond" evidence="1">
    <location>
        <begin position="381"/>
        <end position="442"/>
    </location>
</feature>
<feature type="disulfide bond" evidence="1">
    <location>
        <begin position="388"/>
        <end position="415"/>
    </location>
</feature>
<feature type="disulfide bond" evidence="1">
    <location>
        <begin position="597"/>
        <end position="603"/>
    </location>
</feature>
<reference key="1">
    <citation type="journal article" date="1989" name="AIDS">
        <title>A highly defective HIV-1 strain isolated from a healthy Gabonese individual presenting an atypical western blot.</title>
        <authorList>
            <person name="Huet T."/>
            <person name="Dazza M.C."/>
            <person name="Brun-Vezinet F."/>
            <person name="Roelants G.E."/>
            <person name="Wain-Hobson S."/>
        </authorList>
    </citation>
    <scope>NUCLEOTIDE SEQUENCE [GENOMIC RNA]</scope>
</reference>
<reference key="2">
    <citation type="journal article" date="2003" name="APMIS">
        <title>Pathogens target DC-SIGN to influence their fate DC-SIGN functions as a pathogen receptor with broad specificity.</title>
        <authorList>
            <person name="Geijtenbeek T.B."/>
            <person name="van Kooyk Y."/>
        </authorList>
    </citation>
    <scope>REVIEW</scope>
</reference>
<reference key="3">
    <citation type="journal article" date="2003" name="Biochim. Biophys. Acta">
        <title>The HIV Env-mediated fusion reaction.</title>
        <authorList>
            <person name="Gallo S.A."/>
            <person name="Finnegan C.M."/>
            <person name="Viard M."/>
            <person name="Raviv Y."/>
            <person name="Dimitrov A."/>
            <person name="Rawat S.S."/>
            <person name="Puri A."/>
            <person name="Durell S."/>
            <person name="Blumenthal R."/>
        </authorList>
    </citation>
    <scope>REVIEW</scope>
</reference>
<reference key="4">
    <citation type="journal article" date="2005" name="Cell Death Differ.">
        <title>Mechanisms of apoptosis induction by the HIV-1 envelope.</title>
        <authorList>
            <person name="Perfettini J.-L."/>
            <person name="Castedo M."/>
            <person name="Roumier T."/>
            <person name="Andreau K."/>
            <person name="Nardacci R."/>
            <person name="Piacentini M."/>
            <person name="Kroemer G."/>
        </authorList>
    </citation>
    <scope>REVIEW</scope>
</reference>
<reference key="5">
    <citation type="journal article" date="2005" name="AIDS Res. Hum. Retroviruses">
        <title>V3: HIV's switch-hitter.</title>
        <authorList>
            <person name="Hartley O."/>
            <person name="Klasse P.J."/>
            <person name="Sattentau Q.J."/>
            <person name="Moore J.P."/>
        </authorList>
    </citation>
    <scope>REVIEW</scope>
</reference>
<reference key="6">
    <citation type="journal article" date="2005" name="Drugs">
        <title>Emerging drug targets for antiretroviral therapy.</title>
        <authorList>
            <person name="Reeves J.D."/>
            <person name="Piefer A.J."/>
        </authorList>
    </citation>
    <scope>REVIEW</scope>
</reference>
<reference key="7">
    <citation type="journal article" date="2006" name="EMBO J.">
        <title>HIV and the chemokine system: 10 years later.</title>
        <authorList>
            <person name="Lusso P."/>
        </authorList>
    </citation>
    <scope>REVIEW</scope>
</reference>
<protein>
    <recommendedName>
        <fullName evidence="1">Envelope glycoprotein gp160</fullName>
    </recommendedName>
    <alternativeName>
        <fullName evidence="1">Env polyprotein</fullName>
    </alternativeName>
    <component>
        <recommendedName>
            <fullName evidence="1">Surface protein gp120</fullName>
            <shortName evidence="1">SU</shortName>
        </recommendedName>
        <alternativeName>
            <fullName evidence="1">Glycoprotein 120</fullName>
            <shortName evidence="1">gp120</shortName>
        </alternativeName>
    </component>
    <component>
        <recommendedName>
            <fullName evidence="1">Transmembrane protein gp41</fullName>
            <shortName evidence="1">TM</shortName>
        </recommendedName>
        <alternativeName>
            <fullName evidence="1">Glycoprotein 41</fullName>
            <shortName evidence="1">gp41</shortName>
        </alternativeName>
    </component>
</protein>
<sequence length="855" mass="97476">MTARGTRKNYQRLWRWGTMLLGMLMICSAAENLWVTVYYGVPVWKEATTTLFCASDARAYATEVHNVWATHACVPTDPNPQEVVLGNVTENFDMWKNNMVEQMQEDIISLWDQSLKPCVKLTPLCVTLDCTDVNTTSSSLRNATNTTSSSWETMEKGELKNCSFNTTTSIRDKMQEQYALFYKLDVLPIDKNDTKFRLIHCNTSTITQACPKISFEPIPMHYCTPAGFAILKCNDKKFNGTGPCTNVSTVQCTHGIKPVVSTQLLLNGSLAEEEVIIRSSNFTNNAKIIIVQLNKSVEINCTRPNNNTRNRISIGPGRAFHTTKQIIGDIRQAHCNLSRATWEKTLEQIATKLRKQFRNKTIAFDRSSGGDPEIVMHSFNCGGEFFYCNTSQLFNSTWNDTTRANSTEVTITLPCRIKQIVNMWQEVGKAMYAPPISGQIRCSSKITGLLLTRDGGKNTTNGIEIFRPAGGDMRDNWRSELYKYKVVKIEPLGVAPTKARRRVVQREKRAVGMLGAMFLGFLGAAGSTMGARSMTLTVQARQLLSGIVQQQNNLLRAIEAQQHLLQLTVWGIKQLQARVLAVERYLKDQQLLGIWGCSGKLICTTTVPWNASWSNKSLNEIWDNMTWMQWEREIDNYTHLIYTLIEESQNQQEKNEQELLELDKWAGLWSWFSITNWLWYIRIFIIIVGGLVGLRIVFAVLSIVNRVRQGYSPLSFQTRLPTQRGPDRPEGIEEEGGERDRDRSGRLVDGFLALIWDDLRSLCLFSYHRLRDLILIVARIVELLGRRGWEVLKYWWNLLQYWSQELKNSVISLLNATAIAVAEGTDRVIEIVQRAYRAFLNIPRRIRQGLERALL</sequence>
<organism>
    <name type="scientific">Human immunodeficiency virus type 1 group M subtype B (isolate OYI)</name>
    <name type="common">HIV-1</name>
    <dbReference type="NCBI Taxonomy" id="11699"/>
    <lineage>
        <taxon>Viruses</taxon>
        <taxon>Riboviria</taxon>
        <taxon>Pararnavirae</taxon>
        <taxon>Artverviricota</taxon>
        <taxon>Revtraviricetes</taxon>
        <taxon>Ortervirales</taxon>
        <taxon>Retroviridae</taxon>
        <taxon>Orthoretrovirinae</taxon>
        <taxon>Lentivirus</taxon>
        <taxon>Human immunodeficiency virus type 1</taxon>
    </lineage>
</organism>
<gene>
    <name evidence="1" type="primary">env</name>
</gene>
<accession>P20888</accession>
<evidence type="ECO:0000255" key="1">
    <source>
        <dbReference type="HAMAP-Rule" id="MF_04083"/>
    </source>
</evidence>
<evidence type="ECO:0000256" key="2">
    <source>
        <dbReference type="SAM" id="MobiDB-lite"/>
    </source>
</evidence>
<proteinExistence type="inferred from homology"/>
<name>ENV_HV1OY</name>